<keyword id="KW-1003">Cell membrane</keyword>
<keyword id="KW-0133">Cell shape</keyword>
<keyword id="KW-0961">Cell wall biogenesis/degradation</keyword>
<keyword id="KW-0328">Glycosyltransferase</keyword>
<keyword id="KW-0472">Membrane</keyword>
<keyword id="KW-0573">Peptidoglycan synthesis</keyword>
<keyword id="KW-0808">Transferase</keyword>
<keyword id="KW-0812">Transmembrane</keyword>
<keyword id="KW-1133">Transmembrane helix</keyword>
<reference key="1">
    <citation type="journal article" date="2005" name="J. Bacteriol.">
        <title>Insights on evolution of virulence and resistance from the complete genome analysis of an early methicillin-resistant Staphylococcus aureus strain and a biofilm-producing methicillin-resistant Staphylococcus epidermidis strain.</title>
        <authorList>
            <person name="Gill S.R."/>
            <person name="Fouts D.E."/>
            <person name="Archer G.L."/>
            <person name="Mongodin E.F."/>
            <person name="DeBoy R.T."/>
            <person name="Ravel J."/>
            <person name="Paulsen I.T."/>
            <person name="Kolonay J.F."/>
            <person name="Brinkac L.M."/>
            <person name="Beanan M.J."/>
            <person name="Dodson R.J."/>
            <person name="Daugherty S.C."/>
            <person name="Madupu R."/>
            <person name="Angiuoli S.V."/>
            <person name="Durkin A.S."/>
            <person name="Haft D.H."/>
            <person name="Vamathevan J.J."/>
            <person name="Khouri H."/>
            <person name="Utterback T.R."/>
            <person name="Lee C."/>
            <person name="Dimitrov G."/>
            <person name="Jiang L."/>
            <person name="Qin H."/>
            <person name="Weidman J."/>
            <person name="Tran K."/>
            <person name="Kang K.H."/>
            <person name="Hance I.R."/>
            <person name="Nelson K.E."/>
            <person name="Fraser C.M."/>
        </authorList>
    </citation>
    <scope>NUCLEOTIDE SEQUENCE [LARGE SCALE GENOMIC DNA]</scope>
    <source>
        <strain>COL</strain>
    </source>
</reference>
<name>MGT_STAAC</name>
<protein>
    <recommendedName>
        <fullName evidence="1">Monofunctional glycosyltransferase</fullName>
        <shortName evidence="1">MGT</shortName>
        <ecNumber evidence="1">2.4.99.28</ecNumber>
    </recommendedName>
    <alternativeName>
        <fullName evidence="1">Peptidoglycan TGase</fullName>
    </alternativeName>
</protein>
<proteinExistence type="inferred from homology"/>
<accession>Q5HEQ0</accession>
<evidence type="ECO:0000255" key="1">
    <source>
        <dbReference type="HAMAP-Rule" id="MF_01434"/>
    </source>
</evidence>
<dbReference type="EC" id="2.4.99.28" evidence="1"/>
<dbReference type="EMBL" id="CP000046">
    <property type="protein sequence ID" value="AAW38373.1"/>
    <property type="molecule type" value="Genomic_DNA"/>
</dbReference>
<dbReference type="SMR" id="Q5HEQ0"/>
<dbReference type="IntAct" id="Q5HEQ0">
    <property type="interactions" value="4"/>
</dbReference>
<dbReference type="CAZy" id="GT51">
    <property type="family name" value="Glycosyltransferase Family 51"/>
</dbReference>
<dbReference type="KEGG" id="sac:SACOL1932"/>
<dbReference type="HOGENOM" id="CLU_006354_1_2_9"/>
<dbReference type="UniPathway" id="UPA00219"/>
<dbReference type="Proteomes" id="UP000000530">
    <property type="component" value="Chromosome"/>
</dbReference>
<dbReference type="GO" id="GO:0030288">
    <property type="term" value="C:outer membrane-bounded periplasmic space"/>
    <property type="evidence" value="ECO:0007669"/>
    <property type="project" value="TreeGrafter"/>
</dbReference>
<dbReference type="GO" id="GO:0005886">
    <property type="term" value="C:plasma membrane"/>
    <property type="evidence" value="ECO:0007669"/>
    <property type="project" value="UniProtKB-SubCell"/>
</dbReference>
<dbReference type="GO" id="GO:0008955">
    <property type="term" value="F:peptidoglycan glycosyltransferase activity"/>
    <property type="evidence" value="ECO:0007669"/>
    <property type="project" value="UniProtKB-UniRule"/>
</dbReference>
<dbReference type="GO" id="GO:0071555">
    <property type="term" value="P:cell wall organization"/>
    <property type="evidence" value="ECO:0007669"/>
    <property type="project" value="UniProtKB-KW"/>
</dbReference>
<dbReference type="GO" id="GO:0009252">
    <property type="term" value="P:peptidoglycan biosynthetic process"/>
    <property type="evidence" value="ECO:0007669"/>
    <property type="project" value="UniProtKB-UniRule"/>
</dbReference>
<dbReference type="GO" id="GO:0008360">
    <property type="term" value="P:regulation of cell shape"/>
    <property type="evidence" value="ECO:0007669"/>
    <property type="project" value="UniProtKB-KW"/>
</dbReference>
<dbReference type="Gene3D" id="1.10.3810.10">
    <property type="entry name" value="Biosynthetic peptidoglycan transglycosylase-like"/>
    <property type="match status" value="1"/>
</dbReference>
<dbReference type="HAMAP" id="MF_01434">
    <property type="entry name" value="MGT"/>
    <property type="match status" value="1"/>
</dbReference>
<dbReference type="InterPro" id="IPR001264">
    <property type="entry name" value="Glyco_trans_51"/>
</dbReference>
<dbReference type="InterPro" id="IPR050396">
    <property type="entry name" value="Glycosyltr_51/Transpeptidase"/>
</dbReference>
<dbReference type="InterPro" id="IPR023346">
    <property type="entry name" value="Lysozyme-like_dom_sf"/>
</dbReference>
<dbReference type="InterPro" id="IPR022978">
    <property type="entry name" value="Monofunct_glyco_trans"/>
</dbReference>
<dbReference type="InterPro" id="IPR036950">
    <property type="entry name" value="PBP_transglycosylase"/>
</dbReference>
<dbReference type="NCBIfam" id="NF010008">
    <property type="entry name" value="PRK13481.1"/>
    <property type="match status" value="1"/>
</dbReference>
<dbReference type="PANTHER" id="PTHR32282">
    <property type="entry name" value="BINDING PROTEIN TRANSPEPTIDASE, PUTATIVE-RELATED"/>
    <property type="match status" value="1"/>
</dbReference>
<dbReference type="PANTHER" id="PTHR32282:SF11">
    <property type="entry name" value="PENICILLIN-BINDING PROTEIN 1B"/>
    <property type="match status" value="1"/>
</dbReference>
<dbReference type="Pfam" id="PF00912">
    <property type="entry name" value="Transgly"/>
    <property type="match status" value="1"/>
</dbReference>
<dbReference type="SUPFAM" id="SSF53955">
    <property type="entry name" value="Lysozyme-like"/>
    <property type="match status" value="1"/>
</dbReference>
<comment type="function">
    <text evidence="1">Peptidoglycan polymerase that catalyzes glycan chain elongation using lipid-linked disaccharide-pentapeptide as the substrate.</text>
</comment>
<comment type="catalytic activity">
    <reaction evidence="1">
        <text>[GlcNAc-(1-&gt;4)-Mur2Ac(oyl-L-Ala-gamma-D-Glu-L-Lys-D-Ala-D-Ala)](n)-di-trans,octa-cis-undecaprenyl diphosphate + beta-D-GlcNAc-(1-&gt;4)-Mur2Ac(oyl-L-Ala-gamma-D-Glu-L-Lys-D-Ala-D-Ala)-di-trans,octa-cis-undecaprenyl diphosphate = [GlcNAc-(1-&gt;4)-Mur2Ac(oyl-L-Ala-gamma-D-Glu-L-Lys-D-Ala-D-Ala)](n+1)-di-trans,octa-cis-undecaprenyl diphosphate + di-trans,octa-cis-undecaprenyl diphosphate + H(+)</text>
        <dbReference type="Rhea" id="RHEA:23708"/>
        <dbReference type="Rhea" id="RHEA-COMP:9602"/>
        <dbReference type="Rhea" id="RHEA-COMP:9603"/>
        <dbReference type="ChEBI" id="CHEBI:15378"/>
        <dbReference type="ChEBI" id="CHEBI:58405"/>
        <dbReference type="ChEBI" id="CHEBI:60033"/>
        <dbReference type="ChEBI" id="CHEBI:78435"/>
        <dbReference type="EC" id="2.4.99.28"/>
    </reaction>
</comment>
<comment type="pathway">
    <text evidence="1">Cell wall biogenesis; peptidoglycan biosynthesis.</text>
</comment>
<comment type="subcellular location">
    <subcellularLocation>
        <location evidence="1">Cell membrane</location>
        <topology evidence="1">Single-pass membrane protein</topology>
    </subcellularLocation>
</comment>
<comment type="similarity">
    <text evidence="1">Belongs to the glycosyltransferase 51 family.</text>
</comment>
<organism>
    <name type="scientific">Staphylococcus aureus (strain COL)</name>
    <dbReference type="NCBI Taxonomy" id="93062"/>
    <lineage>
        <taxon>Bacteria</taxon>
        <taxon>Bacillati</taxon>
        <taxon>Bacillota</taxon>
        <taxon>Bacilli</taxon>
        <taxon>Bacillales</taxon>
        <taxon>Staphylococcaceae</taxon>
        <taxon>Staphylococcus</taxon>
    </lineage>
</organism>
<gene>
    <name evidence="1" type="primary">mgt</name>
    <name type="ordered locus">SACOL1932</name>
</gene>
<sequence>MKRSDRYSNSNEHFEHMKHEPHYNTYYQPVGKPPKKKKSKRILLKILLTILIIIALFIGIMYFLSTRDNVDELRKIENKSSFVSADNMPEYVKGAFISMEDERFYNHHGFDLKGTTRALFSTISDRDVQGGSTITQQVVKNYFYDNDRSFTRKVKELFVAHRVEKQYNKNEILSFYLNNIYFGDNQYTLEGAANHYFGTTVNKNSTTMSHITVLQSAILASKVNAPSVYNINNMSENFTQRVSTNLEKMKQQNYINETQYQQAMSQLNR</sequence>
<feature type="chain" id="PRO_0000083153" description="Monofunctional glycosyltransferase">
    <location>
        <begin position="1"/>
        <end position="269"/>
    </location>
</feature>
<feature type="transmembrane region" description="Helical" evidence="1">
    <location>
        <begin position="46"/>
        <end position="66"/>
    </location>
</feature>